<evidence type="ECO:0000255" key="1">
    <source>
        <dbReference type="PROSITE-ProRule" id="PRU00227"/>
    </source>
</evidence>
<evidence type="ECO:0000256" key="2">
    <source>
        <dbReference type="SAM" id="MobiDB-lite"/>
    </source>
</evidence>
<evidence type="ECO:0000269" key="3">
    <source>
    </source>
</evidence>
<evidence type="ECO:0000303" key="4">
    <source>
    </source>
</evidence>
<evidence type="ECO:0000305" key="5"/>
<feature type="chain" id="PRO_0000443838" description="Sorbicillinoid biosynthetic cluster transcription factor 1">
    <location>
        <begin position="1"/>
        <end position="620"/>
    </location>
</feature>
<feature type="DNA-binding region" description="Zn(2)-C6 fungal-type" evidence="1">
    <location>
        <begin position="10"/>
        <end position="37"/>
    </location>
</feature>
<feature type="region of interest" description="Disordered" evidence="2">
    <location>
        <begin position="285"/>
        <end position="308"/>
    </location>
</feature>
<feature type="compositionally biased region" description="Polar residues" evidence="2">
    <location>
        <begin position="291"/>
        <end position="308"/>
    </location>
</feature>
<reference key="1">
    <citation type="journal article" date="2008" name="Nat. Biotechnol.">
        <title>Genome sequencing and analysis of the filamentous fungus Penicillium chrysogenum.</title>
        <authorList>
            <person name="van den Berg M.A."/>
            <person name="Albang R."/>
            <person name="Albermann K."/>
            <person name="Badger J.H."/>
            <person name="Daran J.-M."/>
            <person name="Driessen A.J.M."/>
            <person name="Garcia-Estrada C."/>
            <person name="Fedorova N.D."/>
            <person name="Harris D.M."/>
            <person name="Heijne W.H.M."/>
            <person name="Joardar V.S."/>
            <person name="Kiel J.A.K.W."/>
            <person name="Kovalchuk A."/>
            <person name="Martin J.F."/>
            <person name="Nierman W.C."/>
            <person name="Nijland J.G."/>
            <person name="Pronk J.T."/>
            <person name="Roubos J.A."/>
            <person name="van der Klei I.J."/>
            <person name="van Peij N.N.M.E."/>
            <person name="Veenhuis M."/>
            <person name="von Doehren H."/>
            <person name="Wagner C."/>
            <person name="Wortman J.R."/>
            <person name="Bovenberg R.A.L."/>
        </authorList>
    </citation>
    <scope>NUCLEOTIDE SEQUENCE [LARGE SCALE GENOMIC DNA]</scope>
    <source>
        <strain>ATCC 28089 / DSM 1075 / NRRL 1951 / Wisconsin 54-1255</strain>
    </source>
</reference>
<reference key="2">
    <citation type="journal article" date="2017" name="Microb. Biotechnol.">
        <title>Mechanism and regulation of sorbicillin biosynthesis by Penicillium chrysogenum.</title>
        <authorList>
            <person name="Guzman-Chavez F."/>
            <person name="Salo O."/>
            <person name="Nygaard Y."/>
            <person name="Lankhorst P.P."/>
            <person name="Bovenberg R.A.L."/>
            <person name="Driessen A.J.M."/>
        </authorList>
    </citation>
    <scope>FUNCTION</scope>
    <scope>DISRUPTION PHENOTYPE</scope>
</reference>
<sequence length="620" mass="69538">MRRQQSGLACEECRRRKARCDRVRPQCGICADAGRTCIVVDKRSPRGPKKGQLKDLRYRLDGTIGCDMDELQMLNFASSESISASDGQEAIDWTLAYDCREERSGTWNHLDISNPRPCIITPISPIQTSASEMTPKGELDMSDLMQADLDLLYFERVHPIVPMIHKRRYLSWANEKTVSPARACLRSAMRTIAAAMSAQFCAFSDKLYACTRSMLEMQDVQGENGLPWMTTTRASRRRIEHEMIQAWLLLAHCEFLRKPEQDALLASTRAVRLLQLSRLFDIDMHDDETSPNENSGSCPSVSPSTTQNLPDEAWIETEEKRRTLWTAFVLDCLSSMLSDRPSMLHEEMINTRLPMPERDFQGGQRPTPMGFLPETMGKTGDCETLSSFAQCVVLANLFGRCIAHRRLAQSVSFPESGSESKSRQFWMRHEWLAAAAAHATRTMPPTQAPNECKSETTKCDPLAAFNRILAYSACISLSETAEARAWETLDDHTLALSYRQVASQAAYEIALLIQKAPRIAFFKMHPVLPNAIYLAARFLRTTTPHFATPAEHDHNSIHHLLVALGYLSSVNNLARDLLVKAEADVGKSARIATEVTGSNWDALMGDTSRHIGMMETSISV</sequence>
<name>SORR1_PENRW</name>
<dbReference type="EMBL" id="AM920436">
    <property type="protein sequence ID" value="CAP95402.1"/>
    <property type="molecule type" value="Genomic_DNA"/>
</dbReference>
<dbReference type="RefSeq" id="XP_002567551.1">
    <property type="nucleotide sequence ID" value="XM_002567505.1"/>
</dbReference>
<dbReference type="VEuPathDB" id="FungiDB:PCH_Pc21g05050"/>
<dbReference type="eggNOG" id="ENOG502SH49">
    <property type="taxonomic scope" value="Eukaryota"/>
</dbReference>
<dbReference type="HOGENOM" id="CLU_011017_3_1_1"/>
<dbReference type="OMA" id="ECEKRAM"/>
<dbReference type="OrthoDB" id="3037908at2759"/>
<dbReference type="BioCyc" id="PCHR:PC21G05050-MONOMER"/>
<dbReference type="Proteomes" id="UP000000724">
    <property type="component" value="Contig Pc00c21"/>
</dbReference>
<dbReference type="GO" id="GO:0005634">
    <property type="term" value="C:nucleus"/>
    <property type="evidence" value="ECO:0007669"/>
    <property type="project" value="UniProtKB-SubCell"/>
</dbReference>
<dbReference type="GO" id="GO:0003677">
    <property type="term" value="F:DNA binding"/>
    <property type="evidence" value="ECO:0007669"/>
    <property type="project" value="UniProtKB-KW"/>
</dbReference>
<dbReference type="GO" id="GO:0000981">
    <property type="term" value="F:DNA-binding transcription factor activity, RNA polymerase II-specific"/>
    <property type="evidence" value="ECO:0007669"/>
    <property type="project" value="InterPro"/>
</dbReference>
<dbReference type="GO" id="GO:0008270">
    <property type="term" value="F:zinc ion binding"/>
    <property type="evidence" value="ECO:0007669"/>
    <property type="project" value="InterPro"/>
</dbReference>
<dbReference type="GO" id="GO:0006351">
    <property type="term" value="P:DNA-templated transcription"/>
    <property type="evidence" value="ECO:0007669"/>
    <property type="project" value="InterPro"/>
</dbReference>
<dbReference type="CDD" id="cd12148">
    <property type="entry name" value="fungal_TF_MHR"/>
    <property type="match status" value="1"/>
</dbReference>
<dbReference type="CDD" id="cd00067">
    <property type="entry name" value="GAL4"/>
    <property type="match status" value="1"/>
</dbReference>
<dbReference type="Gene3D" id="4.10.240.10">
    <property type="entry name" value="Zn(2)-C6 fungal-type DNA-binding domain"/>
    <property type="match status" value="1"/>
</dbReference>
<dbReference type="InterPro" id="IPR050815">
    <property type="entry name" value="TF_fung"/>
</dbReference>
<dbReference type="InterPro" id="IPR007219">
    <property type="entry name" value="Transcription_factor_dom_fun"/>
</dbReference>
<dbReference type="InterPro" id="IPR036864">
    <property type="entry name" value="Zn2-C6_fun-type_DNA-bd_sf"/>
</dbReference>
<dbReference type="InterPro" id="IPR001138">
    <property type="entry name" value="Zn2Cys6_DnaBD"/>
</dbReference>
<dbReference type="PANTHER" id="PTHR47338:SF3">
    <property type="entry name" value="C6 FINGER DOMAIN TRANSCRIPTION FACTOR DBAA-RELATED"/>
    <property type="match status" value="1"/>
</dbReference>
<dbReference type="PANTHER" id="PTHR47338">
    <property type="entry name" value="ZN(II)2CYS6 TRANSCRIPTION FACTOR (EUROFUNG)-RELATED"/>
    <property type="match status" value="1"/>
</dbReference>
<dbReference type="Pfam" id="PF04082">
    <property type="entry name" value="Fungal_trans"/>
    <property type="match status" value="1"/>
</dbReference>
<dbReference type="Pfam" id="PF00172">
    <property type="entry name" value="Zn_clus"/>
    <property type="match status" value="1"/>
</dbReference>
<dbReference type="SMART" id="SM00906">
    <property type="entry name" value="Fungal_trans"/>
    <property type="match status" value="1"/>
</dbReference>
<dbReference type="SMART" id="SM00066">
    <property type="entry name" value="GAL4"/>
    <property type="match status" value="1"/>
</dbReference>
<dbReference type="SUPFAM" id="SSF57701">
    <property type="entry name" value="Zn2/Cys6 DNA-binding domain"/>
    <property type="match status" value="1"/>
</dbReference>
<dbReference type="PROSITE" id="PS00463">
    <property type="entry name" value="ZN2_CY6_FUNGAL_1"/>
    <property type="match status" value="1"/>
</dbReference>
<dbReference type="PROSITE" id="PS50048">
    <property type="entry name" value="ZN2_CY6_FUNGAL_2"/>
    <property type="match status" value="1"/>
</dbReference>
<accession>B6HN75</accession>
<gene>
    <name evidence="4" type="primary">sorR1</name>
    <name type="ORF">Pc21g05050</name>
</gene>
<keyword id="KW-0238">DNA-binding</keyword>
<keyword id="KW-0479">Metal-binding</keyword>
<keyword id="KW-0539">Nucleus</keyword>
<keyword id="KW-1185">Reference proteome</keyword>
<keyword id="KW-0804">Transcription</keyword>
<keyword id="KW-0805">Transcription regulation</keyword>
<keyword id="KW-0862">Zinc</keyword>
<organism>
    <name type="scientific">Penicillium rubens (strain ATCC 28089 / DSM 1075 / NRRL 1951 / Wisconsin 54-1255)</name>
    <name type="common">Penicillium chrysogenum</name>
    <dbReference type="NCBI Taxonomy" id="500485"/>
    <lineage>
        <taxon>Eukaryota</taxon>
        <taxon>Fungi</taxon>
        <taxon>Dikarya</taxon>
        <taxon>Ascomycota</taxon>
        <taxon>Pezizomycotina</taxon>
        <taxon>Eurotiomycetes</taxon>
        <taxon>Eurotiomycetidae</taxon>
        <taxon>Eurotiales</taxon>
        <taxon>Aspergillaceae</taxon>
        <taxon>Penicillium</taxon>
        <taxon>Penicillium chrysogenum species complex</taxon>
    </lineage>
</organism>
<proteinExistence type="predicted"/>
<protein>
    <recommendedName>
        <fullName evidence="4">Sorbicillinoid biosynthetic cluster transcription factor 1</fullName>
    </recommendedName>
</protein>
<comment type="function">
    <text evidence="3">Transcription factor that acts as the main regulator of the gene cluster that mediates the biosynthesis of sorbicillinoids, a diverse group of yellow secondary metabolites that restrict growth of competing pathogenic fungi but not of bacteria (PubMed:28618182).</text>
</comment>
<comment type="subcellular location">
    <subcellularLocation>
        <location evidence="5">Nucleus</location>
    </subcellularLocation>
</comment>
<comment type="disruption phenotype">
    <text evidence="3">Abolishes the expression of the entire sorbicillin biosynthesis gene cluster, and consequently, the production of all sorbicillinoid-related compounds (PubMed:28618182).</text>
</comment>